<organismHost>
    <name type="scientific">Escherichia coli</name>
    <dbReference type="NCBI Taxonomy" id="562"/>
</organismHost>
<keyword id="KW-0903">Direct protein sequencing</keyword>
<keyword id="KW-1185">Reference proteome</keyword>
<gene>
    <name type="primary">y00B</name>
    <name type="synonym">60.1</name>
</gene>
<name>Y00B_BPT4</name>
<accession>P39487</accession>
<dbReference type="EMBL" id="M19728">
    <property type="status" value="NOT_ANNOTATED_CDS"/>
    <property type="molecule type" value="Genomic_DNA"/>
</dbReference>
<dbReference type="EMBL" id="AF158101">
    <property type="protein sequence ID" value="AAD42507.1"/>
    <property type="molecule type" value="Genomic_DNA"/>
</dbReference>
<dbReference type="PIR" id="JS0540">
    <property type="entry name" value="JS0540"/>
</dbReference>
<dbReference type="RefSeq" id="NP_049619.1">
    <property type="nucleotide sequence ID" value="NC_000866.4"/>
</dbReference>
<dbReference type="GeneID" id="1258780"/>
<dbReference type="KEGG" id="vg:1258780"/>
<dbReference type="OrthoDB" id="12345at10239"/>
<dbReference type="Proteomes" id="UP000009087">
    <property type="component" value="Segment"/>
</dbReference>
<proteinExistence type="evidence at protein level"/>
<organism>
    <name type="scientific">Enterobacteria phage T4</name>
    <name type="common">Bacteriophage T4</name>
    <dbReference type="NCBI Taxonomy" id="10665"/>
    <lineage>
        <taxon>Viruses</taxon>
        <taxon>Duplodnaviria</taxon>
        <taxon>Heunggongvirae</taxon>
        <taxon>Uroviricota</taxon>
        <taxon>Caudoviricetes</taxon>
        <taxon>Straboviridae</taxon>
        <taxon>Tevenvirinae</taxon>
        <taxon>Tequatrovirus</taxon>
    </lineage>
</organism>
<protein>
    <recommendedName>
        <fullName>Uncharacterized 14.7 kDa protein in Gp60-mobA intergenic region</fullName>
    </recommendedName>
</protein>
<feature type="chain" id="PRO_0000165077" description="Uncharacterized 14.7 kDa protein in Gp60-mobA intergenic region">
    <location>
        <begin position="1"/>
        <end position="126"/>
    </location>
</feature>
<sequence length="126" mass="14651">MTCFKNEKGEVFRLHVNDPRIKTEKLVGVGNTVAATAKAAELEKAKPWYNKSATNPEAVKLIPNLYEWYVTKYDPDHYKRTGVAKWKSVNNITVNSKLFGRAFNEFKRGWIPDEKFYEVYNEICKN</sequence>
<reference key="1">
    <citation type="journal article" date="1988" name="Science">
        <title>A persistent untranslated sequence within bacteriophage T4 DNA topoisomerase gene 60.</title>
        <authorList>
            <person name="Huang W.M."/>
            <person name="Ao S.-Z."/>
            <person name="Casjens S."/>
            <person name="Orlandi R."/>
            <person name="Zeikus R."/>
            <person name="Weiss R."/>
            <person name="Winge D."/>
            <person name="Fang M."/>
        </authorList>
    </citation>
    <scope>NUCLEOTIDE SEQUENCE [GENOMIC DNA]</scope>
    <scope>PROTEIN SEQUENCE</scope>
</reference>
<reference key="2">
    <citation type="journal article" date="2003" name="Microbiol. Mol. Biol. Rev.">
        <title>Bacteriophage T4 genome.</title>
        <authorList>
            <person name="Miller E.S."/>
            <person name="Kutter E."/>
            <person name="Mosig G."/>
            <person name="Arisaka F."/>
            <person name="Kunisawa T."/>
            <person name="Ruger W."/>
        </authorList>
    </citation>
    <scope>NUCLEOTIDE SEQUENCE [LARGE SCALE GENOMIC DNA]</scope>
</reference>